<organism>
    <name type="scientific">Yersinia enterocolitica serotype O:8 / biotype 1B (strain NCTC 13174 / 8081)</name>
    <dbReference type="NCBI Taxonomy" id="393305"/>
    <lineage>
        <taxon>Bacteria</taxon>
        <taxon>Pseudomonadati</taxon>
        <taxon>Pseudomonadota</taxon>
        <taxon>Gammaproteobacteria</taxon>
        <taxon>Enterobacterales</taxon>
        <taxon>Yersiniaceae</taxon>
        <taxon>Yersinia</taxon>
    </lineage>
</organism>
<feature type="chain" id="PRO_1000069917" description="Chromosome partition protein MukB">
    <location>
        <begin position="1"/>
        <end position="1481"/>
    </location>
</feature>
<feature type="region of interest" description="Flexible hinge" evidence="1">
    <location>
        <begin position="666"/>
        <end position="783"/>
    </location>
</feature>
<feature type="coiled-coil region" evidence="1">
    <location>
        <begin position="338"/>
        <end position="480"/>
    </location>
</feature>
<feature type="coiled-coil region" evidence="1">
    <location>
        <begin position="509"/>
        <end position="604"/>
    </location>
</feature>
<feature type="coiled-coil region" evidence="1">
    <location>
        <begin position="780"/>
        <end position="805"/>
    </location>
</feature>
<feature type="coiled-coil region" evidence="1">
    <location>
        <begin position="835"/>
        <end position="1116"/>
    </location>
</feature>
<feature type="coiled-coil region" evidence="1">
    <location>
        <begin position="1210"/>
        <end position="1265"/>
    </location>
</feature>
<feature type="binding site" evidence="1">
    <location>
        <begin position="34"/>
        <end position="41"/>
    </location>
    <ligand>
        <name>ATP</name>
        <dbReference type="ChEBI" id="CHEBI:30616"/>
    </ligand>
</feature>
<proteinExistence type="inferred from homology"/>
<sequence length="1481" mass="169264">MIERGKFRSLTLVNWNGFFARTFDLDELVTTLSGGNGAGKSTTMAAFVTALIPDLTLLHFRNTTEAGATSGSRDKGLHGKLRAGVCYSTLDVVNSRHQRVIVGVRLQQVAGRDRKVDIKPFTIQGLPTAIQPTQILTEVVGERQARVLSLQELKESVEAMEGVQFKQFNSITDYHSLMFDLGVIPKRLRSSADRSKFYRLIEASLYGGISSAITRSLRDYLLPENSGVRKAFQDMEAALRENRMTLEAIRVTQSDRDLFKHLISEATSYVAADYMRHANERRIHLDGALVLRRELLASRKQLVTEQYRHVEMSRELAEQSGAESDLETDYQAASDHLSLVQTAMRQQEKIERYQSDLEELTYRLEEQNEVVAEASEQQADNEARAEAAELEVDELKSQLADYQQALDVQQTRAIQYQQALQALERARALCQLPELTADNAEDWLETFQAKEQEATEALLQLEQKLSVADAAHSQFEQAYQLVVSIAGQVSRSEAWQTARELLRDWPSQQHLAERVQPLRMRLSELEQRLRAQQDAERLLQEFCKRQGQAYQPEELEELQRELESTVEELSLSVSDAGERRMEMRQELEQIKLKIQELTARAPVWLAAQDALSQLSEQSGEALEDSRQVTECMQQLLERERETTVERDEVAAAKRAIDAQIERLSQPSGAEDSRMIALAERFGGVLLSEIYDDVTLDDAPYFSALYGPSRHGIVVPDLSLVRDQLAGLEDCPEDLYLIEGDPQSFDDSVFAVEELEKAVVVKIADRQWRYSRYPEVPLFGRAARENRLEALYQERDSLAERYATLSFDVQKTQRLHQAFSRFIGSHLAVAFDSDPEAEIRLLNTRRGEIERALNAHEERNQQQRQQFEQAKEGISALNRLIPLVSLLLDDTLADRVEEITEELTEAQEAARHIQKHGASLTKLEPLLAVLQSDPQQHEQLKENYAQAQNSQRQAKQQAFALVEVVQRRAHFGYTDSAGMLTENSDLNDKLRQRLEQAEAERTRAREQLRQYQAQFTQYNQVLASLKSSYDAKRDMLKELSQELVDIGVQADANAEARARTRRDELHAALSTNRSRRNQLEKQLTFCEAEMDSLQKKLRKLERDYHQIREQVVNAKAGWCAVMRMVKDNGVERRLHRRELAYMDGDELRSMSDKALGALRLAVADNEHLRDVLRMSEDPKRPERKIQFYIAVYQHLRERIRQDIIRTDDPVEAIEQMEIELGRLTEELTAREQKLAISSKSVSNIIRKTIQREQNRIRMLNQGLQAVSFGQVKSVRLNVNVREAHATLLDVLSEQQEQHQDLFNSNRLTFSEALAKLYQRLNPQMDMGQRLPQTIGEELLDYRNYLELEVEVNRGADGWLRAESGALSTGEAIGTGMSILVMVVQSWEEESRRLRGKDISPCRLLFLDEAARLDAKSIATLFELCERLEMQLIIAAPENISPEKGTTYKLVRKVFQNHEHVHVVGLRGFANEIPTLPSIPVEQ</sequence>
<keyword id="KW-0067">ATP-binding</keyword>
<keyword id="KW-0131">Cell cycle</keyword>
<keyword id="KW-0132">Cell division</keyword>
<keyword id="KW-0159">Chromosome partition</keyword>
<keyword id="KW-0175">Coiled coil</keyword>
<keyword id="KW-0963">Cytoplasm</keyword>
<keyword id="KW-0226">DNA condensation</keyword>
<keyword id="KW-0238">DNA-binding</keyword>
<keyword id="KW-0547">Nucleotide-binding</keyword>
<accession>A1JMM2</accession>
<gene>
    <name evidence="1" type="primary">mukB</name>
    <name type="ordered locus">YE1556</name>
</gene>
<comment type="function">
    <text evidence="1">Plays a central role in chromosome condensation, segregation and cell cycle progression. Functions as a homodimer, which is essential for chromosome partition. Involved in negative DNA supercoiling in vivo, and by this means organize and compact chromosomes. May achieve or facilitate chromosome segregation by condensation DNA from both sides of a centrally located replisome during cell division.</text>
</comment>
<comment type="subunit">
    <text evidence="1">Homodimerization via its hinge domain. Binds to DNA via its C-terminal region. Interacts, and probably forms a ternary complex, with MukE and MukF via its C-terminal region. The complex formation is stimulated by calcium or magnesium. Interacts with tubulin-related protein FtsZ.</text>
</comment>
<comment type="subcellular location">
    <subcellularLocation>
        <location evidence="1">Cytoplasm</location>
        <location evidence="1">Nucleoid</location>
    </subcellularLocation>
    <text evidence="1">Restricted to the nucleoid region.</text>
</comment>
<comment type="domain">
    <text evidence="1">The hinge domain, which separates the large intramolecular coiled coil regions, allows the homodimerization, forming a V-shaped homodimer.</text>
</comment>
<comment type="similarity">
    <text evidence="1">Belongs to the SMC family. MukB subfamily.</text>
</comment>
<evidence type="ECO:0000255" key="1">
    <source>
        <dbReference type="HAMAP-Rule" id="MF_01800"/>
    </source>
</evidence>
<dbReference type="EMBL" id="AM286415">
    <property type="protein sequence ID" value="CAL11634.1"/>
    <property type="molecule type" value="Genomic_DNA"/>
</dbReference>
<dbReference type="RefSeq" id="WP_005170968.1">
    <property type="nucleotide sequence ID" value="NC_008800.1"/>
</dbReference>
<dbReference type="RefSeq" id="YP_001005850.1">
    <property type="nucleotide sequence ID" value="NC_008800.1"/>
</dbReference>
<dbReference type="SMR" id="A1JMM2"/>
<dbReference type="KEGG" id="yen:YE1556"/>
<dbReference type="PATRIC" id="fig|393305.7.peg.1684"/>
<dbReference type="eggNOG" id="COG3096">
    <property type="taxonomic scope" value="Bacteria"/>
</dbReference>
<dbReference type="HOGENOM" id="CLU_004430_0_0_6"/>
<dbReference type="OrthoDB" id="6722439at2"/>
<dbReference type="Proteomes" id="UP000000642">
    <property type="component" value="Chromosome"/>
</dbReference>
<dbReference type="GO" id="GO:0005737">
    <property type="term" value="C:cytoplasm"/>
    <property type="evidence" value="ECO:0007669"/>
    <property type="project" value="UniProtKB-UniRule"/>
</dbReference>
<dbReference type="GO" id="GO:0009295">
    <property type="term" value="C:nucleoid"/>
    <property type="evidence" value="ECO:0007669"/>
    <property type="project" value="UniProtKB-SubCell"/>
</dbReference>
<dbReference type="GO" id="GO:0005524">
    <property type="term" value="F:ATP binding"/>
    <property type="evidence" value="ECO:0007669"/>
    <property type="project" value="UniProtKB-UniRule"/>
</dbReference>
<dbReference type="GO" id="GO:0003677">
    <property type="term" value="F:DNA binding"/>
    <property type="evidence" value="ECO:0007669"/>
    <property type="project" value="UniProtKB-UniRule"/>
</dbReference>
<dbReference type="GO" id="GO:0051301">
    <property type="term" value="P:cell division"/>
    <property type="evidence" value="ECO:0007669"/>
    <property type="project" value="UniProtKB-KW"/>
</dbReference>
<dbReference type="GO" id="GO:0030261">
    <property type="term" value="P:chromosome condensation"/>
    <property type="evidence" value="ECO:0007669"/>
    <property type="project" value="UniProtKB-KW"/>
</dbReference>
<dbReference type="GO" id="GO:0007059">
    <property type="term" value="P:chromosome segregation"/>
    <property type="evidence" value="ECO:0007669"/>
    <property type="project" value="UniProtKB-UniRule"/>
</dbReference>
<dbReference type="GO" id="GO:0006260">
    <property type="term" value="P:DNA replication"/>
    <property type="evidence" value="ECO:0007669"/>
    <property type="project" value="UniProtKB-UniRule"/>
</dbReference>
<dbReference type="FunFam" id="3.30.70.3500:FF:000001">
    <property type="entry name" value="Chromosome partition protein MukB"/>
    <property type="match status" value="1"/>
</dbReference>
<dbReference type="FunFam" id="3.40.1140.10:FF:000001">
    <property type="entry name" value="Chromosome partition protein MukB"/>
    <property type="match status" value="1"/>
</dbReference>
<dbReference type="FunFam" id="3.40.1140.10:FF:000002">
    <property type="entry name" value="Chromosome partition protein MukB"/>
    <property type="match status" value="1"/>
</dbReference>
<dbReference type="Gene3D" id="1.10.287.1490">
    <property type="match status" value="1"/>
</dbReference>
<dbReference type="Gene3D" id="1.20.58.850">
    <property type="match status" value="1"/>
</dbReference>
<dbReference type="Gene3D" id="3.40.1140.10">
    <property type="match status" value="2"/>
</dbReference>
<dbReference type="Gene3D" id="1.20.5.420">
    <property type="entry name" value="Immunoglobulin FC, subunit C"/>
    <property type="match status" value="1"/>
</dbReference>
<dbReference type="Gene3D" id="3.30.70.3500">
    <property type="entry name" value="MukB, hinge domain"/>
    <property type="match status" value="1"/>
</dbReference>
<dbReference type="HAMAP" id="MF_01800">
    <property type="entry name" value="MukB"/>
    <property type="match status" value="1"/>
</dbReference>
<dbReference type="InterPro" id="IPR012090">
    <property type="entry name" value="MukB"/>
</dbReference>
<dbReference type="InterPro" id="IPR050308">
    <property type="entry name" value="MukB/SMC"/>
</dbReference>
<dbReference type="InterPro" id="IPR032520">
    <property type="entry name" value="MukB_hinge"/>
</dbReference>
<dbReference type="InterPro" id="IPR042501">
    <property type="entry name" value="MukB_hinge_sf"/>
</dbReference>
<dbReference type="InterPro" id="IPR007406">
    <property type="entry name" value="MukB_N_dom"/>
</dbReference>
<dbReference type="InterPro" id="IPR027417">
    <property type="entry name" value="P-loop_NTPase"/>
</dbReference>
<dbReference type="NCBIfam" id="NF003422">
    <property type="entry name" value="PRK04863.1"/>
    <property type="match status" value="1"/>
</dbReference>
<dbReference type="PANTHER" id="PTHR42963">
    <property type="entry name" value="CHROMOSOME PARTITION PROTEIN MUKB"/>
    <property type="match status" value="1"/>
</dbReference>
<dbReference type="PANTHER" id="PTHR42963:SF1">
    <property type="entry name" value="DUF4476 DOMAIN-CONTAINING PROTEIN"/>
    <property type="match status" value="1"/>
</dbReference>
<dbReference type="Pfam" id="PF04310">
    <property type="entry name" value="MukB"/>
    <property type="match status" value="1"/>
</dbReference>
<dbReference type="Pfam" id="PF16330">
    <property type="entry name" value="MukB_hinge"/>
    <property type="match status" value="1"/>
</dbReference>
<dbReference type="Pfam" id="PF13558">
    <property type="entry name" value="SbcC_Walker_B"/>
    <property type="match status" value="1"/>
</dbReference>
<dbReference type="PIRSF" id="PIRSF005246">
    <property type="entry name" value="MukB"/>
    <property type="match status" value="1"/>
</dbReference>
<dbReference type="SUPFAM" id="SSF52540">
    <property type="entry name" value="P-loop containing nucleoside triphosphate hydrolases"/>
    <property type="match status" value="2"/>
</dbReference>
<protein>
    <recommendedName>
        <fullName evidence="1">Chromosome partition protein MukB</fullName>
    </recommendedName>
    <alternativeName>
        <fullName evidence="1">Structural maintenance of chromosome-related protein</fullName>
    </alternativeName>
</protein>
<name>MUKB_YERE8</name>
<reference key="1">
    <citation type="journal article" date="2006" name="PLoS Genet.">
        <title>The complete genome sequence and comparative genome analysis of the high pathogenicity Yersinia enterocolitica strain 8081.</title>
        <authorList>
            <person name="Thomson N.R."/>
            <person name="Howard S."/>
            <person name="Wren B.W."/>
            <person name="Holden M.T.G."/>
            <person name="Crossman L."/>
            <person name="Challis G.L."/>
            <person name="Churcher C."/>
            <person name="Mungall K."/>
            <person name="Brooks K."/>
            <person name="Chillingworth T."/>
            <person name="Feltwell T."/>
            <person name="Abdellah Z."/>
            <person name="Hauser H."/>
            <person name="Jagels K."/>
            <person name="Maddison M."/>
            <person name="Moule S."/>
            <person name="Sanders M."/>
            <person name="Whitehead S."/>
            <person name="Quail M.A."/>
            <person name="Dougan G."/>
            <person name="Parkhill J."/>
            <person name="Prentice M.B."/>
        </authorList>
    </citation>
    <scope>NUCLEOTIDE SEQUENCE [LARGE SCALE GENOMIC DNA]</scope>
    <source>
        <strain>NCTC 13174 / 8081</strain>
    </source>
</reference>